<reference key="1">
    <citation type="journal article" date="2012" name="BMC Genomics">
        <title>Comparative genomics and transcriptomics of lineages I, II, and III strains of Listeria monocytogenes.</title>
        <authorList>
            <person name="Hain T."/>
            <person name="Ghai R."/>
            <person name="Billion A."/>
            <person name="Kuenne C.T."/>
            <person name="Steinweg C."/>
            <person name="Izar B."/>
            <person name="Mohamed W."/>
            <person name="Mraheil M."/>
            <person name="Domann E."/>
            <person name="Schaffrath S."/>
            <person name="Karst U."/>
            <person name="Goesmann A."/>
            <person name="Oehm S."/>
            <person name="Puhler A."/>
            <person name="Merkl R."/>
            <person name="Vorwerk S."/>
            <person name="Glaser P."/>
            <person name="Garrido P."/>
            <person name="Rusniok C."/>
            <person name="Buchrieser C."/>
            <person name="Goebel W."/>
            <person name="Chakraborty T."/>
        </authorList>
    </citation>
    <scope>NUCLEOTIDE SEQUENCE [LARGE SCALE GENOMIC DNA]</scope>
    <source>
        <strain>CLIP80459</strain>
    </source>
</reference>
<feature type="chain" id="PRO_1000213230" description="1-(5-phosphoribosyl)-5-[(5-phosphoribosylamino)methylideneamino] imidazole-4-carboxamide isomerase">
    <location>
        <begin position="1"/>
        <end position="240"/>
    </location>
</feature>
<feature type="active site" description="Proton acceptor" evidence="1">
    <location>
        <position position="8"/>
    </location>
</feature>
<feature type="active site" description="Proton donor" evidence="1">
    <location>
        <position position="129"/>
    </location>
</feature>
<gene>
    <name evidence="1" type="primary">hisA</name>
    <name type="ordered locus">Lm4b_00590</name>
</gene>
<comment type="catalytic activity">
    <reaction evidence="1">
        <text>1-(5-phospho-beta-D-ribosyl)-5-[(5-phospho-beta-D-ribosylamino)methylideneamino]imidazole-4-carboxamide = 5-[(5-phospho-1-deoxy-D-ribulos-1-ylimino)methylamino]-1-(5-phospho-beta-D-ribosyl)imidazole-4-carboxamide</text>
        <dbReference type="Rhea" id="RHEA:15469"/>
        <dbReference type="ChEBI" id="CHEBI:58435"/>
        <dbReference type="ChEBI" id="CHEBI:58525"/>
        <dbReference type="EC" id="5.3.1.16"/>
    </reaction>
</comment>
<comment type="pathway">
    <text evidence="1">Amino-acid biosynthesis; L-histidine biosynthesis; L-histidine from 5-phospho-alpha-D-ribose 1-diphosphate: step 4/9.</text>
</comment>
<comment type="subcellular location">
    <subcellularLocation>
        <location evidence="1">Cytoplasm</location>
    </subcellularLocation>
</comment>
<comment type="similarity">
    <text evidence="1">Belongs to the HisA/HisF family.</text>
</comment>
<evidence type="ECO:0000255" key="1">
    <source>
        <dbReference type="HAMAP-Rule" id="MF_01014"/>
    </source>
</evidence>
<name>HIS4_LISMC</name>
<accession>C1L0J3</accession>
<keyword id="KW-0028">Amino-acid biosynthesis</keyword>
<keyword id="KW-0963">Cytoplasm</keyword>
<keyword id="KW-0368">Histidine biosynthesis</keyword>
<keyword id="KW-0413">Isomerase</keyword>
<sequence length="240" mass="25889">MQIFPAIDLKNGQCVRLFQGDFSKKTVVNEDPIAQAKAFATDGATYLHIVDLDGALEGRPINLEIIQRMKKAAKIPVQVGGGIRSMAQVDYYLESGIDRVIIGSAALTDPDFLRAAVQKYGAKIVAGIDAKNGFVATRGWLDVSQVSYLDLAKRMEKVGVETIIYTDISRDGTLTGPNLEQMANLKEHVKVSLIASGGVSSRADLEALAQLGLYGAIAGKALYNHDISMSDIVEVEQIAY</sequence>
<protein>
    <recommendedName>
        <fullName evidence="1">1-(5-phosphoribosyl)-5-[(5-phosphoribosylamino)methylideneamino] imidazole-4-carboxamide isomerase</fullName>
        <ecNumber evidence="1">5.3.1.16</ecNumber>
    </recommendedName>
    <alternativeName>
        <fullName evidence="1">Phosphoribosylformimino-5-aminoimidazole carboxamide ribotide isomerase</fullName>
    </alternativeName>
</protein>
<proteinExistence type="inferred from homology"/>
<dbReference type="EC" id="5.3.1.16" evidence="1"/>
<dbReference type="EMBL" id="FM242711">
    <property type="protein sequence ID" value="CAS04358.1"/>
    <property type="molecule type" value="Genomic_DNA"/>
</dbReference>
<dbReference type="RefSeq" id="WP_003725466.1">
    <property type="nucleotide sequence ID" value="NC_012488.1"/>
</dbReference>
<dbReference type="SMR" id="C1L0J3"/>
<dbReference type="KEGG" id="lmc:Lm4b_00590"/>
<dbReference type="HOGENOM" id="CLU_048577_1_1_9"/>
<dbReference type="UniPathway" id="UPA00031">
    <property type="reaction ID" value="UER00009"/>
</dbReference>
<dbReference type="GO" id="GO:0005737">
    <property type="term" value="C:cytoplasm"/>
    <property type="evidence" value="ECO:0007669"/>
    <property type="project" value="UniProtKB-SubCell"/>
</dbReference>
<dbReference type="GO" id="GO:0003949">
    <property type="term" value="F:1-(5-phosphoribosyl)-5-[(5-phosphoribosylamino)methylideneamino]imidazole-4-carboxamide isomerase activity"/>
    <property type="evidence" value="ECO:0007669"/>
    <property type="project" value="UniProtKB-UniRule"/>
</dbReference>
<dbReference type="GO" id="GO:0000105">
    <property type="term" value="P:L-histidine biosynthetic process"/>
    <property type="evidence" value="ECO:0007669"/>
    <property type="project" value="UniProtKB-UniRule"/>
</dbReference>
<dbReference type="GO" id="GO:0000162">
    <property type="term" value="P:L-tryptophan biosynthetic process"/>
    <property type="evidence" value="ECO:0007669"/>
    <property type="project" value="TreeGrafter"/>
</dbReference>
<dbReference type="CDD" id="cd04732">
    <property type="entry name" value="HisA"/>
    <property type="match status" value="1"/>
</dbReference>
<dbReference type="FunFam" id="3.20.20.70:FF:000009">
    <property type="entry name" value="1-(5-phosphoribosyl)-5-[(5-phosphoribosylamino)methylideneamino] imidazole-4-carboxamide isomerase"/>
    <property type="match status" value="1"/>
</dbReference>
<dbReference type="Gene3D" id="3.20.20.70">
    <property type="entry name" value="Aldolase class I"/>
    <property type="match status" value="1"/>
</dbReference>
<dbReference type="HAMAP" id="MF_01014">
    <property type="entry name" value="HisA"/>
    <property type="match status" value="1"/>
</dbReference>
<dbReference type="InterPro" id="IPR013785">
    <property type="entry name" value="Aldolase_TIM"/>
</dbReference>
<dbReference type="InterPro" id="IPR006062">
    <property type="entry name" value="His_biosynth"/>
</dbReference>
<dbReference type="InterPro" id="IPR006063">
    <property type="entry name" value="HisA_bact_arch"/>
</dbReference>
<dbReference type="InterPro" id="IPR044524">
    <property type="entry name" value="Isoase_HisA-like"/>
</dbReference>
<dbReference type="InterPro" id="IPR023016">
    <property type="entry name" value="Isoase_HisA-like_bact"/>
</dbReference>
<dbReference type="InterPro" id="IPR011060">
    <property type="entry name" value="RibuloseP-bd_barrel"/>
</dbReference>
<dbReference type="NCBIfam" id="TIGR00007">
    <property type="entry name" value="1-(5-phosphoribosyl)-5-[(5-phosphoribosylamino)methylideneamino]imidazole-4-carboxamide isomerase"/>
    <property type="match status" value="1"/>
</dbReference>
<dbReference type="PANTHER" id="PTHR43090">
    <property type="entry name" value="1-(5-PHOSPHORIBOSYL)-5-[(5-PHOSPHORIBOSYLAMINO)METHYLIDENEAMINO] IMIDAZOLE-4-CARBOXAMIDE ISOMERASE"/>
    <property type="match status" value="1"/>
</dbReference>
<dbReference type="PANTHER" id="PTHR43090:SF2">
    <property type="entry name" value="1-(5-PHOSPHORIBOSYL)-5-[(5-PHOSPHORIBOSYLAMINO)METHYLIDENEAMINO] IMIDAZOLE-4-CARBOXAMIDE ISOMERASE"/>
    <property type="match status" value="1"/>
</dbReference>
<dbReference type="Pfam" id="PF00977">
    <property type="entry name" value="His_biosynth"/>
    <property type="match status" value="1"/>
</dbReference>
<dbReference type="SUPFAM" id="SSF51366">
    <property type="entry name" value="Ribulose-phoshate binding barrel"/>
    <property type="match status" value="1"/>
</dbReference>
<organism>
    <name type="scientific">Listeria monocytogenes serotype 4b (strain CLIP80459)</name>
    <dbReference type="NCBI Taxonomy" id="568819"/>
    <lineage>
        <taxon>Bacteria</taxon>
        <taxon>Bacillati</taxon>
        <taxon>Bacillota</taxon>
        <taxon>Bacilli</taxon>
        <taxon>Bacillales</taxon>
        <taxon>Listeriaceae</taxon>
        <taxon>Listeria</taxon>
    </lineage>
</organism>